<feature type="chain" id="PRO_1000015578" description="33 kDa chaperonin">
    <location>
        <begin position="1"/>
        <end position="290"/>
    </location>
</feature>
<feature type="disulfide bond" description="Redox-active" evidence="1">
    <location>
        <begin position="235"/>
        <end position="237"/>
    </location>
</feature>
<feature type="disulfide bond" description="Redox-active" evidence="1">
    <location>
        <begin position="268"/>
        <end position="271"/>
    </location>
</feature>
<dbReference type="EMBL" id="CP000261">
    <property type="protein sequence ID" value="ABF35160.1"/>
    <property type="molecule type" value="Genomic_DNA"/>
</dbReference>
<dbReference type="SMR" id="Q1JDZ8"/>
<dbReference type="KEGG" id="spj:MGAS2096_Spy0108"/>
<dbReference type="HOGENOM" id="CLU_054493_1_0_9"/>
<dbReference type="GO" id="GO:0005737">
    <property type="term" value="C:cytoplasm"/>
    <property type="evidence" value="ECO:0007669"/>
    <property type="project" value="UniProtKB-SubCell"/>
</dbReference>
<dbReference type="GO" id="GO:0044183">
    <property type="term" value="F:protein folding chaperone"/>
    <property type="evidence" value="ECO:0007669"/>
    <property type="project" value="TreeGrafter"/>
</dbReference>
<dbReference type="GO" id="GO:0051082">
    <property type="term" value="F:unfolded protein binding"/>
    <property type="evidence" value="ECO:0007669"/>
    <property type="project" value="UniProtKB-UniRule"/>
</dbReference>
<dbReference type="GO" id="GO:0042026">
    <property type="term" value="P:protein refolding"/>
    <property type="evidence" value="ECO:0007669"/>
    <property type="project" value="TreeGrafter"/>
</dbReference>
<dbReference type="CDD" id="cd00498">
    <property type="entry name" value="Hsp33"/>
    <property type="match status" value="1"/>
</dbReference>
<dbReference type="Gene3D" id="3.55.30.10">
    <property type="entry name" value="Hsp33 domain"/>
    <property type="match status" value="1"/>
</dbReference>
<dbReference type="Gene3D" id="3.90.1280.10">
    <property type="entry name" value="HSP33 redox switch-like"/>
    <property type="match status" value="1"/>
</dbReference>
<dbReference type="HAMAP" id="MF_00117">
    <property type="entry name" value="HslO"/>
    <property type="match status" value="1"/>
</dbReference>
<dbReference type="InterPro" id="IPR000397">
    <property type="entry name" value="Heat_shock_Hsp33"/>
</dbReference>
<dbReference type="InterPro" id="IPR016154">
    <property type="entry name" value="Heat_shock_Hsp33_C"/>
</dbReference>
<dbReference type="InterPro" id="IPR016153">
    <property type="entry name" value="Heat_shock_Hsp33_N"/>
</dbReference>
<dbReference type="NCBIfam" id="NF001033">
    <property type="entry name" value="PRK00114.1"/>
    <property type="match status" value="1"/>
</dbReference>
<dbReference type="PANTHER" id="PTHR30111">
    <property type="entry name" value="33 KDA CHAPERONIN"/>
    <property type="match status" value="1"/>
</dbReference>
<dbReference type="PANTHER" id="PTHR30111:SF1">
    <property type="entry name" value="33 KDA CHAPERONIN"/>
    <property type="match status" value="1"/>
</dbReference>
<dbReference type="Pfam" id="PF01430">
    <property type="entry name" value="HSP33"/>
    <property type="match status" value="1"/>
</dbReference>
<dbReference type="PIRSF" id="PIRSF005261">
    <property type="entry name" value="Heat_shock_Hsp33"/>
    <property type="match status" value="1"/>
</dbReference>
<dbReference type="SUPFAM" id="SSF64397">
    <property type="entry name" value="Hsp33 domain"/>
    <property type="match status" value="1"/>
</dbReference>
<dbReference type="SUPFAM" id="SSF118352">
    <property type="entry name" value="HSP33 redox switch-like"/>
    <property type="match status" value="1"/>
</dbReference>
<reference key="1">
    <citation type="journal article" date="2006" name="Proc. Natl. Acad. Sci. U.S.A.">
        <title>Molecular genetic anatomy of inter- and intraserotype variation in the human bacterial pathogen group A Streptococcus.</title>
        <authorList>
            <person name="Beres S.B."/>
            <person name="Richter E.W."/>
            <person name="Nagiec M.J."/>
            <person name="Sumby P."/>
            <person name="Porcella S.F."/>
            <person name="DeLeo F.R."/>
            <person name="Musser J.M."/>
        </authorList>
    </citation>
    <scope>NUCLEOTIDE SEQUENCE [LARGE SCALE GENOMIC DNA]</scope>
    <source>
        <strain>MGAS2096</strain>
    </source>
</reference>
<sequence>MDKIIKSIAQSGSFRAYVLDSTETVALAQEKHNTLSSSTVALGRTLIANQILAANQKGDSRITVKVIGDSSFGHIISVADTKGHVKGYIQNTGVDIKKTATGEVLVGPFMGNGHFVTIIDYGTGNPYTSTTPLITGEIGEDFAYYLTESEQTPSAIGLNVLLDENDKVKVAGGFMVQVLPGASEEEVARYEKRLQEMPAISHLLASKNHVDALLEAIYGDEPYKRLSEEPLSFQCDCSRERFEAALMTLPKADLQAMIDEDKGAEIVCQFCGTKYQFNESDLEAIINDKA</sequence>
<proteinExistence type="inferred from homology"/>
<evidence type="ECO:0000255" key="1">
    <source>
        <dbReference type="HAMAP-Rule" id="MF_00117"/>
    </source>
</evidence>
<organism>
    <name type="scientific">Streptococcus pyogenes serotype M12 (strain MGAS2096)</name>
    <dbReference type="NCBI Taxonomy" id="370553"/>
    <lineage>
        <taxon>Bacteria</taxon>
        <taxon>Bacillati</taxon>
        <taxon>Bacillota</taxon>
        <taxon>Bacilli</taxon>
        <taxon>Lactobacillales</taxon>
        <taxon>Streptococcaceae</taxon>
        <taxon>Streptococcus</taxon>
    </lineage>
</organism>
<name>HSLO_STRPB</name>
<protein>
    <recommendedName>
        <fullName evidence="1">33 kDa chaperonin</fullName>
    </recommendedName>
    <alternativeName>
        <fullName evidence="1">Heat shock protein 33 homolog</fullName>
        <shortName evidence="1">HSP33</shortName>
    </alternativeName>
</protein>
<accession>Q1JDZ8</accession>
<keyword id="KW-0143">Chaperone</keyword>
<keyword id="KW-0963">Cytoplasm</keyword>
<keyword id="KW-1015">Disulfide bond</keyword>
<keyword id="KW-0676">Redox-active center</keyword>
<keyword id="KW-0862">Zinc</keyword>
<gene>
    <name evidence="1" type="primary">hslO</name>
    <name type="ordered locus">MGAS2096_Spy0108</name>
</gene>
<comment type="function">
    <text evidence="1">Redox regulated molecular chaperone. Protects both thermally unfolding and oxidatively damaged proteins from irreversible aggregation. Plays an important role in the bacterial defense system toward oxidative stress.</text>
</comment>
<comment type="subcellular location">
    <subcellularLocation>
        <location evidence="1">Cytoplasm</location>
    </subcellularLocation>
</comment>
<comment type="PTM">
    <text evidence="1">Under oxidizing conditions two disulfide bonds are formed involving the reactive cysteines. Under reducing conditions zinc is bound to the reactive cysteines and the protein is inactive.</text>
</comment>
<comment type="similarity">
    <text evidence="1">Belongs to the HSP33 family.</text>
</comment>